<comment type="function">
    <text evidence="1">Catalyzes the formation of 5-methyl-uridine at position 1939 (m5U1939) in 23S rRNA.</text>
</comment>
<comment type="catalytic activity">
    <reaction evidence="1">
        <text>uridine(1939) in 23S rRNA + S-adenosyl-L-methionine = 5-methyluridine(1939) in 23S rRNA + S-adenosyl-L-homocysteine + H(+)</text>
        <dbReference type="Rhea" id="RHEA:42908"/>
        <dbReference type="Rhea" id="RHEA-COMP:10278"/>
        <dbReference type="Rhea" id="RHEA-COMP:10279"/>
        <dbReference type="ChEBI" id="CHEBI:15378"/>
        <dbReference type="ChEBI" id="CHEBI:57856"/>
        <dbReference type="ChEBI" id="CHEBI:59789"/>
        <dbReference type="ChEBI" id="CHEBI:65315"/>
        <dbReference type="ChEBI" id="CHEBI:74447"/>
        <dbReference type="EC" id="2.1.1.190"/>
    </reaction>
</comment>
<comment type="similarity">
    <text evidence="1">Belongs to the class I-like SAM-binding methyltransferase superfamily. RNA M5U methyltransferase family. RlmD subfamily.</text>
</comment>
<dbReference type="EC" id="2.1.1.190" evidence="1"/>
<dbReference type="EMBL" id="CR628336">
    <property type="protein sequence ID" value="CAH12563.1"/>
    <property type="molecule type" value="Genomic_DNA"/>
</dbReference>
<dbReference type="RefSeq" id="WP_011213742.1">
    <property type="nucleotide sequence ID" value="NC_006368.1"/>
</dbReference>
<dbReference type="SMR" id="Q5X5A8"/>
<dbReference type="KEGG" id="lpp:lpp1412"/>
<dbReference type="LegioList" id="lpp1412"/>
<dbReference type="HOGENOM" id="CLU_014689_8_2_6"/>
<dbReference type="GO" id="GO:0051539">
    <property type="term" value="F:4 iron, 4 sulfur cluster binding"/>
    <property type="evidence" value="ECO:0007669"/>
    <property type="project" value="UniProtKB-KW"/>
</dbReference>
<dbReference type="GO" id="GO:0005506">
    <property type="term" value="F:iron ion binding"/>
    <property type="evidence" value="ECO:0007669"/>
    <property type="project" value="UniProtKB-UniRule"/>
</dbReference>
<dbReference type="GO" id="GO:0003723">
    <property type="term" value="F:RNA binding"/>
    <property type="evidence" value="ECO:0007669"/>
    <property type="project" value="InterPro"/>
</dbReference>
<dbReference type="GO" id="GO:0070041">
    <property type="term" value="F:rRNA (uridine-C5-)-methyltransferase activity"/>
    <property type="evidence" value="ECO:0007669"/>
    <property type="project" value="UniProtKB-UniRule"/>
</dbReference>
<dbReference type="GO" id="GO:0070475">
    <property type="term" value="P:rRNA base methylation"/>
    <property type="evidence" value="ECO:0007669"/>
    <property type="project" value="TreeGrafter"/>
</dbReference>
<dbReference type="CDD" id="cd02440">
    <property type="entry name" value="AdoMet_MTases"/>
    <property type="match status" value="1"/>
</dbReference>
<dbReference type="FunFam" id="3.40.50.150:FF:000009">
    <property type="entry name" value="23S rRNA (Uracil(1939)-C(5))-methyltransferase RlmD"/>
    <property type="match status" value="1"/>
</dbReference>
<dbReference type="FunFam" id="2.40.50.140:FF:000097">
    <property type="entry name" value="23S rRNA (uracil(1939)-C(5))-methyltransferase RlmD"/>
    <property type="match status" value="1"/>
</dbReference>
<dbReference type="Gene3D" id="2.40.50.1070">
    <property type="match status" value="1"/>
</dbReference>
<dbReference type="Gene3D" id="2.40.50.140">
    <property type="entry name" value="Nucleic acid-binding proteins"/>
    <property type="match status" value="1"/>
</dbReference>
<dbReference type="Gene3D" id="3.40.50.150">
    <property type="entry name" value="Vaccinia Virus protein VP39"/>
    <property type="match status" value="1"/>
</dbReference>
<dbReference type="HAMAP" id="MF_01010">
    <property type="entry name" value="23SrRNA_methyltr_RlmD"/>
    <property type="match status" value="1"/>
</dbReference>
<dbReference type="InterPro" id="IPR001566">
    <property type="entry name" value="23S_rRNA_MeTrfase_RlmD"/>
</dbReference>
<dbReference type="InterPro" id="IPR030390">
    <property type="entry name" value="MeTrfase_TrmA_AS"/>
</dbReference>
<dbReference type="InterPro" id="IPR030391">
    <property type="entry name" value="MeTrfase_TrmA_CS"/>
</dbReference>
<dbReference type="InterPro" id="IPR012340">
    <property type="entry name" value="NA-bd_OB-fold"/>
</dbReference>
<dbReference type="InterPro" id="IPR029063">
    <property type="entry name" value="SAM-dependent_MTases_sf"/>
</dbReference>
<dbReference type="InterPro" id="IPR002792">
    <property type="entry name" value="TRAM_dom"/>
</dbReference>
<dbReference type="InterPro" id="IPR010280">
    <property type="entry name" value="U5_MeTrfase_fam"/>
</dbReference>
<dbReference type="NCBIfam" id="NF009639">
    <property type="entry name" value="PRK13168.1"/>
    <property type="match status" value="1"/>
</dbReference>
<dbReference type="NCBIfam" id="TIGR00479">
    <property type="entry name" value="rumA"/>
    <property type="match status" value="1"/>
</dbReference>
<dbReference type="PANTHER" id="PTHR11061:SF49">
    <property type="entry name" value="23S RRNA (URACIL(1939)-C(5))-METHYLTRANSFERASE RLMD"/>
    <property type="match status" value="1"/>
</dbReference>
<dbReference type="PANTHER" id="PTHR11061">
    <property type="entry name" value="RNA M5U METHYLTRANSFERASE"/>
    <property type="match status" value="1"/>
</dbReference>
<dbReference type="Pfam" id="PF01938">
    <property type="entry name" value="TRAM"/>
    <property type="match status" value="1"/>
</dbReference>
<dbReference type="Pfam" id="PF05958">
    <property type="entry name" value="tRNA_U5-meth_tr"/>
    <property type="match status" value="1"/>
</dbReference>
<dbReference type="SUPFAM" id="SSF50249">
    <property type="entry name" value="Nucleic acid-binding proteins"/>
    <property type="match status" value="1"/>
</dbReference>
<dbReference type="SUPFAM" id="SSF53335">
    <property type="entry name" value="S-adenosyl-L-methionine-dependent methyltransferases"/>
    <property type="match status" value="1"/>
</dbReference>
<dbReference type="PROSITE" id="PS51687">
    <property type="entry name" value="SAM_MT_RNA_M5U"/>
    <property type="match status" value="1"/>
</dbReference>
<dbReference type="PROSITE" id="PS50926">
    <property type="entry name" value="TRAM"/>
    <property type="match status" value="1"/>
</dbReference>
<dbReference type="PROSITE" id="PS01230">
    <property type="entry name" value="TRMA_1"/>
    <property type="match status" value="1"/>
</dbReference>
<dbReference type="PROSITE" id="PS01231">
    <property type="entry name" value="TRMA_2"/>
    <property type="match status" value="1"/>
</dbReference>
<accession>Q5X5A8</accession>
<organism>
    <name type="scientific">Legionella pneumophila (strain Paris)</name>
    <dbReference type="NCBI Taxonomy" id="297246"/>
    <lineage>
        <taxon>Bacteria</taxon>
        <taxon>Pseudomonadati</taxon>
        <taxon>Pseudomonadota</taxon>
        <taxon>Gammaproteobacteria</taxon>
        <taxon>Legionellales</taxon>
        <taxon>Legionellaceae</taxon>
        <taxon>Legionella</taxon>
    </lineage>
</organism>
<sequence>MRKVKPKLNLTSQTARIVNLSHDGRGIARVNGKATFIQGALPGEVVEFQYTRVKKDFDEGKLLSIVEPSTLRVEPKCPHYQMCGGCSLQHMSAEEQIRFKQSHLLDLLSRYGHTEPQSVLSPLTSHHWNYRNKARLSTRFVEKKQSTMVGFRERNNPRFITEINQCPILNSKIDTDIVHLRKLIDTMEDKHCIAQIEVAAGDNEVALIFRNLSPLTEQDELKIREFAQQFQYKVFLQPGGLDSVFCFYPSDAHAYLSYELPDYQITFQFHPNDFTQVNAELNRKMVTQAIQLMELKNSDIVLDLFCGLGNFSLPMAKHCSRVIGVEGNKNMVERAYMNAKSNHITNVDFYAANLDDVMEVRSLVNTSFSKVLIDPPRSGALEIVKQIDSIDPERIVYVSCNPITLARDTDILVNQKGYVLITAGVMDMFPHTAHVESIALFQKG</sequence>
<name>RLMD_LEGPA</name>
<feature type="chain" id="PRO_0000161899" description="23S rRNA (uracil(1939)-C(5))-methyltransferase RlmD">
    <location>
        <begin position="1"/>
        <end position="444"/>
    </location>
</feature>
<feature type="domain" description="TRAM" evidence="1">
    <location>
        <begin position="5"/>
        <end position="64"/>
    </location>
</feature>
<feature type="active site" description="Nucleophile" evidence="1">
    <location>
        <position position="400"/>
    </location>
</feature>
<feature type="binding site" evidence="1">
    <location>
        <position position="77"/>
    </location>
    <ligand>
        <name>[4Fe-4S] cluster</name>
        <dbReference type="ChEBI" id="CHEBI:49883"/>
    </ligand>
</feature>
<feature type="binding site" evidence="1">
    <location>
        <position position="83"/>
    </location>
    <ligand>
        <name>[4Fe-4S] cluster</name>
        <dbReference type="ChEBI" id="CHEBI:49883"/>
    </ligand>
</feature>
<feature type="binding site" evidence="1">
    <location>
        <position position="86"/>
    </location>
    <ligand>
        <name>[4Fe-4S] cluster</name>
        <dbReference type="ChEBI" id="CHEBI:49883"/>
    </ligand>
</feature>
<feature type="binding site" evidence="1">
    <location>
        <position position="166"/>
    </location>
    <ligand>
        <name>[4Fe-4S] cluster</name>
        <dbReference type="ChEBI" id="CHEBI:49883"/>
    </ligand>
</feature>
<feature type="binding site" evidence="1">
    <location>
        <position position="276"/>
    </location>
    <ligand>
        <name>S-adenosyl-L-methionine</name>
        <dbReference type="ChEBI" id="CHEBI:59789"/>
    </ligand>
</feature>
<feature type="binding site" evidence="1">
    <location>
        <position position="305"/>
    </location>
    <ligand>
        <name>S-adenosyl-L-methionine</name>
        <dbReference type="ChEBI" id="CHEBI:59789"/>
    </ligand>
</feature>
<feature type="binding site" evidence="1">
    <location>
        <position position="310"/>
    </location>
    <ligand>
        <name>S-adenosyl-L-methionine</name>
        <dbReference type="ChEBI" id="CHEBI:59789"/>
    </ligand>
</feature>
<feature type="binding site" evidence="1">
    <location>
        <position position="326"/>
    </location>
    <ligand>
        <name>S-adenosyl-L-methionine</name>
        <dbReference type="ChEBI" id="CHEBI:59789"/>
    </ligand>
</feature>
<feature type="binding site" evidence="1">
    <location>
        <position position="353"/>
    </location>
    <ligand>
        <name>S-adenosyl-L-methionine</name>
        <dbReference type="ChEBI" id="CHEBI:59789"/>
    </ligand>
</feature>
<feature type="binding site" evidence="1">
    <location>
        <position position="374"/>
    </location>
    <ligand>
        <name>S-adenosyl-L-methionine</name>
        <dbReference type="ChEBI" id="CHEBI:59789"/>
    </ligand>
</feature>
<keyword id="KW-0004">4Fe-4S</keyword>
<keyword id="KW-0408">Iron</keyword>
<keyword id="KW-0411">Iron-sulfur</keyword>
<keyword id="KW-0479">Metal-binding</keyword>
<keyword id="KW-0489">Methyltransferase</keyword>
<keyword id="KW-0698">rRNA processing</keyword>
<keyword id="KW-0949">S-adenosyl-L-methionine</keyword>
<keyword id="KW-0808">Transferase</keyword>
<proteinExistence type="inferred from homology"/>
<reference key="1">
    <citation type="journal article" date="2004" name="Nat. Genet.">
        <title>Evidence in the Legionella pneumophila genome for exploitation of host cell functions and high genome plasticity.</title>
        <authorList>
            <person name="Cazalet C."/>
            <person name="Rusniok C."/>
            <person name="Brueggemann H."/>
            <person name="Zidane N."/>
            <person name="Magnier A."/>
            <person name="Ma L."/>
            <person name="Tichit M."/>
            <person name="Jarraud S."/>
            <person name="Bouchier C."/>
            <person name="Vandenesch F."/>
            <person name="Kunst F."/>
            <person name="Etienne J."/>
            <person name="Glaser P."/>
            <person name="Buchrieser C."/>
        </authorList>
    </citation>
    <scope>NUCLEOTIDE SEQUENCE [LARGE SCALE GENOMIC DNA]</scope>
    <source>
        <strain>Paris</strain>
    </source>
</reference>
<gene>
    <name evidence="1" type="primary">rlmD</name>
    <name type="synonym">rumA</name>
    <name type="ordered locus">lpp1412</name>
</gene>
<evidence type="ECO:0000255" key="1">
    <source>
        <dbReference type="HAMAP-Rule" id="MF_01010"/>
    </source>
</evidence>
<protein>
    <recommendedName>
        <fullName evidence="1">23S rRNA (uracil(1939)-C(5))-methyltransferase RlmD</fullName>
        <ecNumber evidence="1">2.1.1.190</ecNumber>
    </recommendedName>
    <alternativeName>
        <fullName evidence="1">23S rRNA(m5U1939)-methyltransferase</fullName>
    </alternativeName>
</protein>